<keyword id="KW-0007">Acetylation</keyword>
<keyword id="KW-0131">Cell cycle</keyword>
<keyword id="KW-1003">Cell membrane</keyword>
<keyword id="KW-0968">Cytoplasmic vesicle</keyword>
<keyword id="KW-0967">Endosome</keyword>
<keyword id="KW-0333">Golgi apparatus</keyword>
<keyword id="KW-0342">GTP-binding</keyword>
<keyword id="KW-0378">Hydrolase</keyword>
<keyword id="KW-0449">Lipoprotein</keyword>
<keyword id="KW-0460">Magnesium</keyword>
<keyword id="KW-0472">Membrane</keyword>
<keyword id="KW-0479">Metal-binding</keyword>
<keyword id="KW-0488">Methylation</keyword>
<keyword id="KW-0547">Nucleotide-binding</keyword>
<keyword id="KW-0636">Prenylation</keyword>
<keyword id="KW-0653">Protein transport</keyword>
<keyword id="KW-1185">Reference proteome</keyword>
<keyword id="KW-0813">Transport</keyword>
<name>RB11A_CHICK</name>
<proteinExistence type="evidence at transcript level"/>
<gene>
    <name type="primary">RAB11A</name>
    <name type="ORF">RCJMB04_16p4</name>
</gene>
<reference key="1">
    <citation type="journal article" date="2005" name="Genome Biol.">
        <title>Full-length cDNAs from chicken bursal lymphocytes to facilitate gene function analysis.</title>
        <authorList>
            <person name="Caldwell R.B."/>
            <person name="Kierzek A.M."/>
            <person name="Arakawa H."/>
            <person name="Bezzubov Y."/>
            <person name="Zaim J."/>
            <person name="Fiedler P."/>
            <person name="Kutter S."/>
            <person name="Blagodatski A."/>
            <person name="Kostovska D."/>
            <person name="Koter M."/>
            <person name="Plachy J."/>
            <person name="Carninci P."/>
            <person name="Hayashizaki Y."/>
            <person name="Buerstedde J.-M."/>
        </authorList>
    </citation>
    <scope>NUCLEOTIDE SEQUENCE [LARGE SCALE MRNA]</scope>
    <source>
        <strain>CB</strain>
        <tissue>Bursa of Fabricius</tissue>
    </source>
</reference>
<accession>Q5ZJN2</accession>
<sequence length="216" mass="24439">MGNRDDEYDYLFKVVLIGDSGVGKSNLLSRFTRNEFNLESKSTIGVEFATRSIQVDGKTIKAQIWDTAGQERYRAITSAYYRGAVGALLVYDIAKHLTYENVERWLKELRDHADSNIVIMLVGNKSDLRHLRAVPTDEARAFAEKNGLSFIETSALDSTNVEAAFQTILTEIYRIVSQKQMSDRRENDMSPSNNVVPIHVPPTTENKPKMQCCQNI</sequence>
<comment type="function">
    <text evidence="1">The small GTPases Rab are key regulators of intracellular membrane trafficking, from the formation of transport vesicles to their fusion with membranes. Rabs cycle between an inactive GDP-bound form and an active GTP-bound form that is able to recruit to membranes different set of downstream effectors directly responsible for vesicle formation, movement, tethering and fusion. The small Rab GTPase RAB11A regulates endocytic recycling (By similarity). May also be involved in the regulation of preciliary trafficking and neosynthesized protein export (By similarity).</text>
</comment>
<comment type="catalytic activity">
    <reaction evidence="1">
        <text>GTP + H2O = GDP + phosphate + H(+)</text>
        <dbReference type="Rhea" id="RHEA:19669"/>
        <dbReference type="ChEBI" id="CHEBI:15377"/>
        <dbReference type="ChEBI" id="CHEBI:15378"/>
        <dbReference type="ChEBI" id="CHEBI:37565"/>
        <dbReference type="ChEBI" id="CHEBI:43474"/>
        <dbReference type="ChEBI" id="CHEBI:58189"/>
        <dbReference type="EC" id="3.6.5.2"/>
    </reaction>
    <physiologicalReaction direction="left-to-right" evidence="1">
        <dbReference type="Rhea" id="RHEA:19670"/>
    </physiologicalReaction>
</comment>
<comment type="cofactor">
    <cofactor evidence="1">
        <name>Mg(2+)</name>
        <dbReference type="ChEBI" id="CHEBI:18420"/>
    </cofactor>
</comment>
<comment type="activity regulation">
    <text evidence="5">Regulated by guanine nucleotide exchange factors (GEFs) which promote the exchange of bound GDP for free GTP. Regulated by GTPase activating proteins (GAPs) which increase the GTP hydrolysis activity. Inhibited by GDP dissociation inhibitors (GDIs) which prevent Rab-GDP dissociation.</text>
</comment>
<comment type="subcellular location">
    <subcellularLocation>
        <location evidence="1">Cell membrane</location>
        <topology evidence="5">Lipid-anchor</topology>
    </subcellularLocation>
    <subcellularLocation>
        <location evidence="1">Endosome membrane</location>
    </subcellularLocation>
    <subcellularLocation>
        <location evidence="1">Recycling endosome membrane</location>
        <topology evidence="5">Lipid-anchor</topology>
    </subcellularLocation>
    <subcellularLocation>
        <location evidence="1">Cleavage furrow</location>
    </subcellularLocation>
    <subcellularLocation>
        <location evidence="1">Cytoplasmic vesicle</location>
        <location evidence="1">Phagosome</location>
    </subcellularLocation>
    <subcellularLocation>
        <location evidence="1">Cytoplasmic vesicle membrane</location>
    </subcellularLocation>
    <subcellularLocation>
        <location evidence="1">Golgi apparatus</location>
    </subcellularLocation>
    <subcellularLocation>
        <location evidence="1">Golgi apparatus</location>
        <location evidence="1">trans-Golgi network</location>
    </subcellularLocation>
</comment>
<comment type="domain">
    <text evidence="1">Switch 1, switch 2 and the interswitch regions are characteristic of Rab GTPases and mediate the interactions with Rab downstream effectors. The switch regions undergo conformational changes upon nucleotide binding which drives interaction with specific sets of effector proteins, with most effectors only binding to GTP-bound Rab.</text>
</comment>
<comment type="similarity">
    <text evidence="5">Belongs to the small GTPase superfamily. Rab family.</text>
</comment>
<dbReference type="EC" id="3.6.5.2" evidence="2"/>
<dbReference type="EMBL" id="AJ720402">
    <property type="protein sequence ID" value="CAG32061.1"/>
    <property type="molecule type" value="mRNA"/>
</dbReference>
<dbReference type="RefSeq" id="NP_001005827.1">
    <property type="nucleotide sequence ID" value="NM_001005827.2"/>
</dbReference>
<dbReference type="SMR" id="Q5ZJN2"/>
<dbReference type="FunCoup" id="Q5ZJN2">
    <property type="interactions" value="3107"/>
</dbReference>
<dbReference type="STRING" id="9031.ENSGALP00000012298"/>
<dbReference type="PaxDb" id="9031-ENSGALP00000012298"/>
<dbReference type="GeneID" id="415544"/>
<dbReference type="KEGG" id="gga:415544"/>
<dbReference type="CTD" id="8766"/>
<dbReference type="VEuPathDB" id="HostDB:geneid_415544"/>
<dbReference type="eggNOG" id="KOG0087">
    <property type="taxonomic scope" value="Eukaryota"/>
</dbReference>
<dbReference type="HOGENOM" id="CLU_041217_23_0_1"/>
<dbReference type="InParanoid" id="Q5ZJN2"/>
<dbReference type="OMA" id="ITAIYQM"/>
<dbReference type="OrthoDB" id="9989112at2759"/>
<dbReference type="PhylomeDB" id="Q5ZJN2"/>
<dbReference type="TreeFam" id="TF300099"/>
<dbReference type="Reactome" id="R-GGA-432040">
    <property type="pathway name" value="Vasopressin regulates renal water homeostasis via Aquaporins"/>
</dbReference>
<dbReference type="Reactome" id="R-GGA-5620912">
    <property type="pathway name" value="Anchoring of the basal body to the plasma membrane"/>
</dbReference>
<dbReference type="Reactome" id="R-GGA-5620916">
    <property type="pathway name" value="VxPx cargo-targeting to cilium"/>
</dbReference>
<dbReference type="Reactome" id="R-GGA-8854214">
    <property type="pathway name" value="TBC/RABGAPs"/>
</dbReference>
<dbReference type="PRO" id="PR:Q5ZJN2"/>
<dbReference type="Proteomes" id="UP000000539">
    <property type="component" value="Chromosome 10"/>
</dbReference>
<dbReference type="Bgee" id="ENSGALG00000007615">
    <property type="expression patterns" value="Expressed in colon and 14 other cell types or tissues"/>
</dbReference>
<dbReference type="GO" id="GO:0032154">
    <property type="term" value="C:cleavage furrow"/>
    <property type="evidence" value="ECO:0000250"/>
    <property type="project" value="UniProtKB"/>
</dbReference>
<dbReference type="GO" id="GO:0030666">
    <property type="term" value="C:endocytic vesicle membrane"/>
    <property type="evidence" value="ECO:0000250"/>
    <property type="project" value="UniProtKB"/>
</dbReference>
<dbReference type="GO" id="GO:0005794">
    <property type="term" value="C:Golgi apparatus"/>
    <property type="evidence" value="ECO:0000318"/>
    <property type="project" value="GO_Central"/>
</dbReference>
<dbReference type="GO" id="GO:0000139">
    <property type="term" value="C:Golgi membrane"/>
    <property type="evidence" value="ECO:0000250"/>
    <property type="project" value="UniProtKB"/>
</dbReference>
<dbReference type="GO" id="GO:0045335">
    <property type="term" value="C:phagocytic vesicle"/>
    <property type="evidence" value="ECO:0007669"/>
    <property type="project" value="UniProtKB-SubCell"/>
</dbReference>
<dbReference type="GO" id="GO:0098837">
    <property type="term" value="C:postsynaptic recycling endosome"/>
    <property type="evidence" value="ECO:0000318"/>
    <property type="project" value="GO_Central"/>
</dbReference>
<dbReference type="GO" id="GO:0055038">
    <property type="term" value="C:recycling endosome membrane"/>
    <property type="evidence" value="ECO:0007669"/>
    <property type="project" value="UniProtKB-SubCell"/>
</dbReference>
<dbReference type="GO" id="GO:0032588">
    <property type="term" value="C:trans-Golgi network membrane"/>
    <property type="evidence" value="ECO:0000250"/>
    <property type="project" value="UniProtKB"/>
</dbReference>
<dbReference type="GO" id="GO:0030133">
    <property type="term" value="C:transport vesicle"/>
    <property type="evidence" value="ECO:0000318"/>
    <property type="project" value="GO_Central"/>
</dbReference>
<dbReference type="GO" id="GO:0003925">
    <property type="term" value="F:G protein activity"/>
    <property type="evidence" value="ECO:0007669"/>
    <property type="project" value="UniProtKB-EC"/>
</dbReference>
<dbReference type="GO" id="GO:0005525">
    <property type="term" value="F:GTP binding"/>
    <property type="evidence" value="ECO:0000318"/>
    <property type="project" value="GO_Central"/>
</dbReference>
<dbReference type="GO" id="GO:0003924">
    <property type="term" value="F:GTPase activity"/>
    <property type="evidence" value="ECO:0000318"/>
    <property type="project" value="GO_Central"/>
</dbReference>
<dbReference type="GO" id="GO:0006887">
    <property type="term" value="P:exocytosis"/>
    <property type="evidence" value="ECO:0000318"/>
    <property type="project" value="GO_Central"/>
</dbReference>
<dbReference type="GO" id="GO:0032402">
    <property type="term" value="P:melanosome transport"/>
    <property type="evidence" value="ECO:0000318"/>
    <property type="project" value="GO_Central"/>
</dbReference>
<dbReference type="GO" id="GO:0098887">
    <property type="term" value="P:neurotransmitter receptor transport, endosome to postsynaptic membrane"/>
    <property type="evidence" value="ECO:0000318"/>
    <property type="project" value="GO_Central"/>
</dbReference>
<dbReference type="GO" id="GO:0061512">
    <property type="term" value="P:protein localization to cilium"/>
    <property type="evidence" value="ECO:0000250"/>
    <property type="project" value="UniProtKB"/>
</dbReference>
<dbReference type="GO" id="GO:1902017">
    <property type="term" value="P:regulation of cilium assembly"/>
    <property type="evidence" value="ECO:0000250"/>
    <property type="project" value="UniProtKB"/>
</dbReference>
<dbReference type="GO" id="GO:1902954">
    <property type="term" value="P:regulation of early endosome to recycling endosome transport"/>
    <property type="evidence" value="ECO:0000250"/>
    <property type="project" value="UniProtKB"/>
</dbReference>
<dbReference type="GO" id="GO:2001135">
    <property type="term" value="P:regulation of endocytic recycling"/>
    <property type="evidence" value="ECO:0000250"/>
    <property type="project" value="UniProtKB"/>
</dbReference>
<dbReference type="GO" id="GO:1904779">
    <property type="term" value="P:regulation of protein localization to centrosome"/>
    <property type="evidence" value="ECO:0000250"/>
    <property type="project" value="UniProtKB"/>
</dbReference>
<dbReference type="CDD" id="cd01868">
    <property type="entry name" value="Rab11_like"/>
    <property type="match status" value="1"/>
</dbReference>
<dbReference type="FunFam" id="3.40.50.300:FF:000085">
    <property type="entry name" value="Putative ras-related protein rab-11a"/>
    <property type="match status" value="1"/>
</dbReference>
<dbReference type="Gene3D" id="3.40.50.300">
    <property type="entry name" value="P-loop containing nucleotide triphosphate hydrolases"/>
    <property type="match status" value="1"/>
</dbReference>
<dbReference type="InterPro" id="IPR027417">
    <property type="entry name" value="P-loop_NTPase"/>
</dbReference>
<dbReference type="InterPro" id="IPR050209">
    <property type="entry name" value="Rab_GTPases_membrane_traffic"/>
</dbReference>
<dbReference type="InterPro" id="IPR005225">
    <property type="entry name" value="Small_GTP-bd"/>
</dbReference>
<dbReference type="InterPro" id="IPR001806">
    <property type="entry name" value="Small_GTPase"/>
</dbReference>
<dbReference type="NCBIfam" id="TIGR00231">
    <property type="entry name" value="small_GTP"/>
    <property type="match status" value="1"/>
</dbReference>
<dbReference type="PANTHER" id="PTHR47979">
    <property type="entry name" value="DRAB11-RELATED"/>
    <property type="match status" value="1"/>
</dbReference>
<dbReference type="Pfam" id="PF00071">
    <property type="entry name" value="Ras"/>
    <property type="match status" value="1"/>
</dbReference>
<dbReference type="PRINTS" id="PR00449">
    <property type="entry name" value="RASTRNSFRMNG"/>
</dbReference>
<dbReference type="SMART" id="SM00175">
    <property type="entry name" value="RAB"/>
    <property type="match status" value="1"/>
</dbReference>
<dbReference type="SMART" id="SM00176">
    <property type="entry name" value="RAN"/>
    <property type="match status" value="1"/>
</dbReference>
<dbReference type="SMART" id="SM00173">
    <property type="entry name" value="RAS"/>
    <property type="match status" value="1"/>
</dbReference>
<dbReference type="SMART" id="SM00174">
    <property type="entry name" value="RHO"/>
    <property type="match status" value="1"/>
</dbReference>
<dbReference type="SUPFAM" id="SSF52540">
    <property type="entry name" value="P-loop containing nucleoside triphosphate hydrolases"/>
    <property type="match status" value="1"/>
</dbReference>
<dbReference type="PROSITE" id="PS51419">
    <property type="entry name" value="RAB"/>
    <property type="match status" value="1"/>
</dbReference>
<protein>
    <recommendedName>
        <fullName>Ras-related protein Rab-11A</fullName>
        <ecNumber evidence="2">3.6.5.2</ecNumber>
    </recommendedName>
</protein>
<feature type="initiator methionine" description="Removed" evidence="1">
    <location>
        <position position="1"/>
    </location>
</feature>
<feature type="chain" id="PRO_0000121157" description="Ras-related protein Rab-11A">
    <location>
        <begin position="2"/>
        <end position="213"/>
    </location>
</feature>
<feature type="propeptide" id="PRO_0000370813" description="Removed in mature form" evidence="3">
    <location>
        <begin position="214"/>
        <end position="216"/>
    </location>
</feature>
<feature type="region of interest" description="Disordered" evidence="4">
    <location>
        <begin position="183"/>
        <end position="208"/>
    </location>
</feature>
<feature type="short sequence motif" description="Switch 1" evidence="1">
    <location>
        <begin position="36"/>
        <end position="47"/>
    </location>
</feature>
<feature type="short sequence motif" description="Switch 2" evidence="1">
    <location>
        <begin position="67"/>
        <end position="86"/>
    </location>
</feature>
<feature type="binding site" evidence="1">
    <location>
        <position position="20"/>
    </location>
    <ligand>
        <name>GTP</name>
        <dbReference type="ChEBI" id="CHEBI:37565"/>
    </ligand>
</feature>
<feature type="binding site" evidence="1">
    <location>
        <position position="21"/>
    </location>
    <ligand>
        <name>GTP</name>
        <dbReference type="ChEBI" id="CHEBI:37565"/>
    </ligand>
</feature>
<feature type="binding site" evidence="1">
    <location>
        <position position="22"/>
    </location>
    <ligand>
        <name>GTP</name>
        <dbReference type="ChEBI" id="CHEBI:37565"/>
    </ligand>
</feature>
<feature type="binding site" evidence="1">
    <location>
        <position position="23"/>
    </location>
    <ligand>
        <name>GTP</name>
        <dbReference type="ChEBI" id="CHEBI:37565"/>
    </ligand>
</feature>
<feature type="binding site" evidence="1">
    <location>
        <position position="24"/>
    </location>
    <ligand>
        <name>GTP</name>
        <dbReference type="ChEBI" id="CHEBI:37565"/>
    </ligand>
</feature>
<feature type="binding site" evidence="1">
    <location>
        <position position="25"/>
    </location>
    <ligand>
        <name>GTP</name>
        <dbReference type="ChEBI" id="CHEBI:37565"/>
    </ligand>
</feature>
<feature type="binding site" evidence="1">
    <location>
        <position position="25"/>
    </location>
    <ligand>
        <name>Mg(2+)</name>
        <dbReference type="ChEBI" id="CHEBI:18420"/>
    </ligand>
</feature>
<feature type="binding site" evidence="1">
    <location>
        <position position="26"/>
    </location>
    <ligand>
        <name>GTP</name>
        <dbReference type="ChEBI" id="CHEBI:37565"/>
    </ligand>
</feature>
<feature type="binding site" evidence="1">
    <location>
        <position position="37"/>
    </location>
    <ligand>
        <name>GTP</name>
        <dbReference type="ChEBI" id="CHEBI:37565"/>
    </ligand>
</feature>
<feature type="binding site" evidence="1">
    <location>
        <position position="38"/>
    </location>
    <ligand>
        <name>GTP</name>
        <dbReference type="ChEBI" id="CHEBI:37565"/>
    </ligand>
</feature>
<feature type="binding site" evidence="1">
    <location>
        <position position="40"/>
    </location>
    <ligand>
        <name>GTP</name>
        <dbReference type="ChEBI" id="CHEBI:37565"/>
    </ligand>
</feature>
<feature type="binding site" evidence="1">
    <location>
        <position position="42"/>
    </location>
    <ligand>
        <name>GTP</name>
        <dbReference type="ChEBI" id="CHEBI:37565"/>
    </ligand>
</feature>
<feature type="binding site" evidence="1">
    <location>
        <position position="43"/>
    </location>
    <ligand>
        <name>GTP</name>
        <dbReference type="ChEBI" id="CHEBI:37565"/>
    </ligand>
</feature>
<feature type="binding site" evidence="1">
    <location>
        <position position="43"/>
    </location>
    <ligand>
        <name>Mg(2+)</name>
        <dbReference type="ChEBI" id="CHEBI:18420"/>
    </ligand>
</feature>
<feature type="binding site" evidence="1">
    <location>
        <position position="66"/>
    </location>
    <ligand>
        <name>Mg(2+)</name>
        <dbReference type="ChEBI" id="CHEBI:18420"/>
    </ligand>
</feature>
<feature type="binding site" evidence="1">
    <location>
        <position position="69"/>
    </location>
    <ligand>
        <name>GTP</name>
        <dbReference type="ChEBI" id="CHEBI:37565"/>
    </ligand>
</feature>
<feature type="binding site" evidence="1">
    <location>
        <position position="124"/>
    </location>
    <ligand>
        <name>GTP</name>
        <dbReference type="ChEBI" id="CHEBI:37565"/>
    </ligand>
</feature>
<feature type="binding site" evidence="1">
    <location>
        <position position="125"/>
    </location>
    <ligand>
        <name>GTP</name>
        <dbReference type="ChEBI" id="CHEBI:37565"/>
    </ligand>
</feature>
<feature type="binding site" evidence="1">
    <location>
        <position position="127"/>
    </location>
    <ligand>
        <name>GTP</name>
        <dbReference type="ChEBI" id="CHEBI:37565"/>
    </ligand>
</feature>
<feature type="binding site" evidence="1">
    <location>
        <position position="155"/>
    </location>
    <ligand>
        <name>GTP</name>
        <dbReference type="ChEBI" id="CHEBI:37565"/>
    </ligand>
</feature>
<feature type="binding site" evidence="1">
    <location>
        <position position="156"/>
    </location>
    <ligand>
        <name>GTP</name>
        <dbReference type="ChEBI" id="CHEBI:37565"/>
    </ligand>
</feature>
<feature type="modified residue" description="N-acetylglycine" evidence="1">
    <location>
        <position position="2"/>
    </location>
</feature>
<feature type="modified residue" description="Cysteine methyl ester" evidence="3">
    <location>
        <position position="213"/>
    </location>
</feature>
<feature type="lipid moiety-binding region" description="S-geranylgeranyl cysteine" evidence="1">
    <location>
        <position position="212"/>
    </location>
</feature>
<feature type="lipid moiety-binding region" description="S-geranylgeranyl cysteine" evidence="1">
    <location>
        <position position="213"/>
    </location>
</feature>
<evidence type="ECO:0000250" key="1">
    <source>
        <dbReference type="UniProtKB" id="P62491"/>
    </source>
</evidence>
<evidence type="ECO:0000250" key="2">
    <source>
        <dbReference type="UniProtKB" id="P62493"/>
    </source>
</evidence>
<evidence type="ECO:0000255" key="3"/>
<evidence type="ECO:0000256" key="4">
    <source>
        <dbReference type="SAM" id="MobiDB-lite"/>
    </source>
</evidence>
<evidence type="ECO:0000305" key="5"/>
<organism>
    <name type="scientific">Gallus gallus</name>
    <name type="common">Chicken</name>
    <dbReference type="NCBI Taxonomy" id="9031"/>
    <lineage>
        <taxon>Eukaryota</taxon>
        <taxon>Metazoa</taxon>
        <taxon>Chordata</taxon>
        <taxon>Craniata</taxon>
        <taxon>Vertebrata</taxon>
        <taxon>Euteleostomi</taxon>
        <taxon>Archelosauria</taxon>
        <taxon>Archosauria</taxon>
        <taxon>Dinosauria</taxon>
        <taxon>Saurischia</taxon>
        <taxon>Theropoda</taxon>
        <taxon>Coelurosauria</taxon>
        <taxon>Aves</taxon>
        <taxon>Neognathae</taxon>
        <taxon>Galloanserae</taxon>
        <taxon>Galliformes</taxon>
        <taxon>Phasianidae</taxon>
        <taxon>Phasianinae</taxon>
        <taxon>Gallus</taxon>
    </lineage>
</organism>